<feature type="chain" id="PRO_0000070265" description="Macoilin">
    <location>
        <begin position="1"/>
        <end position="664"/>
    </location>
</feature>
<feature type="transmembrane region" description="Helical" evidence="4">
    <location>
        <begin position="28"/>
        <end position="48"/>
    </location>
</feature>
<feature type="transmembrane region" description="Helical" evidence="4">
    <location>
        <begin position="75"/>
        <end position="95"/>
    </location>
</feature>
<feature type="transmembrane region" description="Helical" evidence="4">
    <location>
        <begin position="120"/>
        <end position="140"/>
    </location>
</feature>
<feature type="transmembrane region" description="Helical" evidence="4">
    <location>
        <begin position="154"/>
        <end position="174"/>
    </location>
</feature>
<feature type="region of interest" description="Disordered" evidence="5">
    <location>
        <begin position="253"/>
        <end position="274"/>
    </location>
</feature>
<feature type="region of interest" description="Disordered" evidence="5">
    <location>
        <begin position="320"/>
        <end position="375"/>
    </location>
</feature>
<feature type="region of interest" description="Disordered" evidence="5">
    <location>
        <begin position="630"/>
        <end position="664"/>
    </location>
</feature>
<feature type="compositionally biased region" description="Basic and acidic residues" evidence="5">
    <location>
        <begin position="253"/>
        <end position="265"/>
    </location>
</feature>
<feature type="compositionally biased region" description="Polar residues" evidence="5">
    <location>
        <begin position="320"/>
        <end position="348"/>
    </location>
</feature>
<feature type="modified residue" description="Phosphoserine" evidence="3">
    <location>
        <position position="305"/>
    </location>
</feature>
<feature type="modified residue" description="Phosphoserine" evidence="3">
    <location>
        <position position="332"/>
    </location>
</feature>
<feature type="modified residue" description="Phosphoserine" evidence="3">
    <location>
        <position position="631"/>
    </location>
</feature>
<feature type="modified residue" description="Phosphoserine" evidence="3">
    <location>
        <position position="634"/>
    </location>
</feature>
<feature type="glycosylation site" description="N-linked (GlcNAc...) asparagine" evidence="4">
    <location>
        <position position="324"/>
    </location>
</feature>
<feature type="glycosylation site" description="N-linked (GlcNAc...) asparagine" evidence="4">
    <location>
        <position position="340"/>
    </location>
</feature>
<feature type="glycosylation site" description="N-linked (GlcNAc...) asparagine" evidence="4">
    <location>
        <position position="452"/>
    </location>
</feature>
<feature type="glycosylation site" description="N-linked (GlcNAc...) asparagine" evidence="4">
    <location>
        <position position="655"/>
    </location>
</feature>
<dbReference type="EMBL" id="AY845020">
    <property type="protein sequence ID" value="AAX11918.1"/>
    <property type="molecule type" value="mRNA"/>
</dbReference>
<dbReference type="RefSeq" id="NP_001033737.1">
    <property type="nucleotide sequence ID" value="NM_001038648.1"/>
</dbReference>
<dbReference type="SMR" id="Q2TLZ1"/>
<dbReference type="FunCoup" id="Q2TLZ1">
    <property type="interactions" value="2431"/>
</dbReference>
<dbReference type="STRING" id="9615.ENSCAFP00000018853"/>
<dbReference type="GlyCosmos" id="Q2TLZ1">
    <property type="glycosylation" value="4 sites, No reported glycans"/>
</dbReference>
<dbReference type="PaxDb" id="9612-ENSCAFP00000018853"/>
<dbReference type="Ensembl" id="ENSCAFT00000020320.4">
    <property type="protein sequence ID" value="ENSCAFP00000018853.3"/>
    <property type="gene ID" value="ENSCAFG00000012804.4"/>
</dbReference>
<dbReference type="Ensembl" id="ENSCAFT00040000429.1">
    <property type="protein sequence ID" value="ENSCAFP00040000348.1"/>
    <property type="gene ID" value="ENSCAFG00040000254.1"/>
</dbReference>
<dbReference type="Ensembl" id="ENSCAFT00845024647.1">
    <property type="protein sequence ID" value="ENSCAFP00845019392.1"/>
    <property type="gene ID" value="ENSCAFG00845013803.1"/>
</dbReference>
<dbReference type="GeneID" id="478180"/>
<dbReference type="KEGG" id="cfa:478180"/>
<dbReference type="CTD" id="55219"/>
<dbReference type="VEuPathDB" id="HostDB:ENSCAFG00845013803"/>
<dbReference type="VGNC" id="VGNC:47589">
    <property type="gene designation" value="MACO1"/>
</dbReference>
<dbReference type="eggNOG" id="KOG1821">
    <property type="taxonomic scope" value="Eukaryota"/>
</dbReference>
<dbReference type="GeneTree" id="ENSGT00390000016613"/>
<dbReference type="InParanoid" id="Q2TLZ1"/>
<dbReference type="OrthoDB" id="10071111at2759"/>
<dbReference type="Proteomes" id="UP000002254">
    <property type="component" value="Chromosome 2"/>
</dbReference>
<dbReference type="Proteomes" id="UP000694429">
    <property type="component" value="Unplaced"/>
</dbReference>
<dbReference type="Proteomes" id="UP000694542">
    <property type="component" value="Chromosome 2"/>
</dbReference>
<dbReference type="Proteomes" id="UP000805418">
    <property type="component" value="Chromosome 2"/>
</dbReference>
<dbReference type="Bgee" id="ENSCAFG00000012804">
    <property type="expression patterns" value="Expressed in adipose tissue and 48 other cell types or tissues"/>
</dbReference>
<dbReference type="GO" id="GO:0030424">
    <property type="term" value="C:axon"/>
    <property type="evidence" value="ECO:0007669"/>
    <property type="project" value="Ensembl"/>
</dbReference>
<dbReference type="GO" id="GO:0044306">
    <property type="term" value="C:neuron projection terminus"/>
    <property type="evidence" value="ECO:0007669"/>
    <property type="project" value="Ensembl"/>
</dbReference>
<dbReference type="GO" id="GO:0031965">
    <property type="term" value="C:nuclear membrane"/>
    <property type="evidence" value="ECO:0007669"/>
    <property type="project" value="UniProtKB-SubCell"/>
</dbReference>
<dbReference type="GO" id="GO:0030867">
    <property type="term" value="C:rough endoplasmic reticulum membrane"/>
    <property type="evidence" value="ECO:0000250"/>
    <property type="project" value="UniProtKB"/>
</dbReference>
<dbReference type="GO" id="GO:0045202">
    <property type="term" value="C:synapse"/>
    <property type="evidence" value="ECO:0007669"/>
    <property type="project" value="Ensembl"/>
</dbReference>
<dbReference type="GO" id="GO:0007420">
    <property type="term" value="P:brain development"/>
    <property type="evidence" value="ECO:0007669"/>
    <property type="project" value="Ensembl"/>
</dbReference>
<dbReference type="GO" id="GO:0023041">
    <property type="term" value="P:neuronal signal transduction"/>
    <property type="evidence" value="ECO:0000250"/>
    <property type="project" value="UniProtKB"/>
</dbReference>
<dbReference type="InterPro" id="IPR019130">
    <property type="entry name" value="Macoilin"/>
</dbReference>
<dbReference type="PANTHER" id="PTHR47464">
    <property type="entry name" value="MACOILIN"/>
    <property type="match status" value="1"/>
</dbReference>
<dbReference type="PANTHER" id="PTHR47464:SF2">
    <property type="entry name" value="MACOILIN"/>
    <property type="match status" value="1"/>
</dbReference>
<dbReference type="Pfam" id="PF09726">
    <property type="entry name" value="Macoilin"/>
    <property type="match status" value="1"/>
</dbReference>
<gene>
    <name type="primary">MACO1</name>
    <name type="synonym">TMEM57</name>
</gene>
<sequence>MKRRNADCSKLRRPLKRNRITEGIYGSTFLYLKFLVVWALVLLADFVLEFRFEYLWPFWLFIRSVYDSFRYQGLAFSVFFVCVAFTSNIICLLFIPIQWLFFAASTYVWVQYVWHTERGVCLPTVSLWILFVYIEAAIRFKDLKNFHVDLCRPFAAHCIGYPVVTLGFGFKSYVSYKMRLRKQKEVQKENEFYMQLLQQALPPEQQMLQKQEKEAEEAAKGLPDMDSSILIHHNGGIPANKKLSTTLPEIEYREKGKEKDKDAKKHNLGINNNNILQPVDSKIQEIEYMENHINSKRLNNDLVGSTENLLKEDSCTASSKNYKNASGVVNSSPRSHSATNGSIPSSSSKNEKKQKCTSKSPSTHKDLMENCIPNNQLSKPDALVRLEQDIKKLKADLQASRQVEQELRSQISSLSSTERGIRSEMGQLRQENELLQNKLHNAVQMKQKDKQNISQLEKKLKAEQEARSFVEKQLMEEKKRKKLEEATAARAVAFAAASRGECTETLRNRIRELEAEGKKLTMDMKVKEDQIRELELKVQELRKYKENEKDTEVLMSALSAMQDKTQHLENSLSAETRIKLDLFSALGDAKRQLEIAQGQILQKDQEIKDLKQKIAEVMAVMPSITYSAATSPLSPVSPHYSSKFVETSPSGLDPNASVYQPLKK</sequence>
<proteinExistence type="evidence at transcript level"/>
<reference key="1">
    <citation type="submission" date="2004-12" db="EMBL/GenBank/DDBJ databases">
        <title>Identification of macoilin as a novel membrane-associated coiled-coil tetraspanin protein.</title>
        <authorList>
            <person name="Huang C.-H."/>
            <person name="Chen Y."/>
        </authorList>
    </citation>
    <scope>NUCLEOTIDE SEQUENCE [MRNA]</scope>
</reference>
<evidence type="ECO:0000250" key="1">
    <source>
        <dbReference type="UniProtKB" id="P91193"/>
    </source>
</evidence>
<evidence type="ECO:0000250" key="2">
    <source>
        <dbReference type="UniProtKB" id="Q7TQE6"/>
    </source>
</evidence>
<evidence type="ECO:0000250" key="3">
    <source>
        <dbReference type="UniProtKB" id="Q8N5G2"/>
    </source>
</evidence>
<evidence type="ECO:0000255" key="4"/>
<evidence type="ECO:0000256" key="5">
    <source>
        <dbReference type="SAM" id="MobiDB-lite"/>
    </source>
</evidence>
<evidence type="ECO:0000305" key="6"/>
<keyword id="KW-0256">Endoplasmic reticulum</keyword>
<keyword id="KW-0325">Glycoprotein</keyword>
<keyword id="KW-0472">Membrane</keyword>
<keyword id="KW-0539">Nucleus</keyword>
<keyword id="KW-0597">Phosphoprotein</keyword>
<keyword id="KW-1185">Reference proteome</keyword>
<keyword id="KW-0812">Transmembrane</keyword>
<keyword id="KW-1133">Transmembrane helix</keyword>
<accession>Q2TLZ1</accession>
<name>MACOI_CANLF</name>
<protein>
    <recommendedName>
        <fullName>Macoilin</fullName>
    </recommendedName>
    <alternativeName>
        <fullName>Transmembrane protein 57</fullName>
    </alternativeName>
</protein>
<comment type="function">
    <text evidence="3">Plays a role in the regulation of neuronal activity.</text>
</comment>
<comment type="subcellular location">
    <subcellularLocation>
        <location evidence="1">Rough endoplasmic reticulum membrane</location>
        <topology evidence="4">Multi-pass membrane protein</topology>
    </subcellularLocation>
    <subcellularLocation>
        <location evidence="1">Nucleus membrane</location>
        <topology evidence="4">Multi-pass membrane protein</topology>
    </subcellularLocation>
    <text evidence="2">Detected in the nucleus membrane of non-neuronal cells and in axonal outgrowths of neuronal cells.</text>
</comment>
<comment type="similarity">
    <text evidence="6">Belongs to the macoilin family.</text>
</comment>
<organism>
    <name type="scientific">Canis lupus familiaris</name>
    <name type="common">Dog</name>
    <name type="synonym">Canis familiaris</name>
    <dbReference type="NCBI Taxonomy" id="9615"/>
    <lineage>
        <taxon>Eukaryota</taxon>
        <taxon>Metazoa</taxon>
        <taxon>Chordata</taxon>
        <taxon>Craniata</taxon>
        <taxon>Vertebrata</taxon>
        <taxon>Euteleostomi</taxon>
        <taxon>Mammalia</taxon>
        <taxon>Eutheria</taxon>
        <taxon>Laurasiatheria</taxon>
        <taxon>Carnivora</taxon>
        <taxon>Caniformia</taxon>
        <taxon>Canidae</taxon>
        <taxon>Canis</taxon>
    </lineage>
</organism>